<sequence length="115" mass="13496">MEHVKYILKQSWSRHSSSKWTEECPSCGQCGVTALVIQDHFGGTIFKTRVDESWHFYNSINGVVYDFTSEQFQAPIEYQHIPSSREEAFLDTNEEQYQHLREAFSRHMNSISEET</sequence>
<gene>
    <name type="primary">yunG</name>
    <name type="ordered locus">BSU32400</name>
</gene>
<organism>
    <name type="scientific">Bacillus subtilis (strain 168)</name>
    <dbReference type="NCBI Taxonomy" id="224308"/>
    <lineage>
        <taxon>Bacteria</taxon>
        <taxon>Bacillati</taxon>
        <taxon>Bacillota</taxon>
        <taxon>Bacilli</taxon>
        <taxon>Bacillales</taxon>
        <taxon>Bacillaceae</taxon>
        <taxon>Bacillus</taxon>
    </lineage>
</organism>
<accession>O32136</accession>
<dbReference type="EMBL" id="AL009126">
    <property type="protein sequence ID" value="CAB15230.1"/>
    <property type="molecule type" value="Genomic_DNA"/>
</dbReference>
<dbReference type="PIR" id="B70016">
    <property type="entry name" value="B70016"/>
</dbReference>
<dbReference type="RefSeq" id="NP_391120.1">
    <property type="nucleotide sequence ID" value="NC_000964.3"/>
</dbReference>
<dbReference type="RefSeq" id="WP_003242865.1">
    <property type="nucleotide sequence ID" value="NZ_OZ025638.1"/>
</dbReference>
<dbReference type="FunCoup" id="O32136">
    <property type="interactions" value="99"/>
</dbReference>
<dbReference type="STRING" id="224308.BSU32400"/>
<dbReference type="PaxDb" id="224308-BSU32400"/>
<dbReference type="EnsemblBacteria" id="CAB15230">
    <property type="protein sequence ID" value="CAB15230"/>
    <property type="gene ID" value="BSU_32400"/>
</dbReference>
<dbReference type="GeneID" id="936684"/>
<dbReference type="KEGG" id="bsu:BSU32400"/>
<dbReference type="PATRIC" id="fig|224308.179.peg.3507"/>
<dbReference type="eggNOG" id="ENOG5032X51">
    <property type="taxonomic scope" value="Bacteria"/>
</dbReference>
<dbReference type="InParanoid" id="O32136"/>
<dbReference type="OrthoDB" id="9792518at2"/>
<dbReference type="BioCyc" id="BSUB:BSU32400-MONOMER"/>
<dbReference type="Proteomes" id="UP000001570">
    <property type="component" value="Chromosome"/>
</dbReference>
<dbReference type="InterPro" id="IPR056238">
    <property type="entry name" value="YunG-like"/>
</dbReference>
<dbReference type="Pfam" id="PF24585">
    <property type="entry name" value="YunG"/>
    <property type="match status" value="1"/>
</dbReference>
<reference key="1">
    <citation type="journal article" date="1997" name="Nature">
        <title>The complete genome sequence of the Gram-positive bacterium Bacillus subtilis.</title>
        <authorList>
            <person name="Kunst F."/>
            <person name="Ogasawara N."/>
            <person name="Moszer I."/>
            <person name="Albertini A.M."/>
            <person name="Alloni G."/>
            <person name="Azevedo V."/>
            <person name="Bertero M.G."/>
            <person name="Bessieres P."/>
            <person name="Bolotin A."/>
            <person name="Borchert S."/>
            <person name="Borriss R."/>
            <person name="Boursier L."/>
            <person name="Brans A."/>
            <person name="Braun M."/>
            <person name="Brignell S.C."/>
            <person name="Bron S."/>
            <person name="Brouillet S."/>
            <person name="Bruschi C.V."/>
            <person name="Caldwell B."/>
            <person name="Capuano V."/>
            <person name="Carter N.M."/>
            <person name="Choi S.-K."/>
            <person name="Codani J.-J."/>
            <person name="Connerton I.F."/>
            <person name="Cummings N.J."/>
            <person name="Daniel R.A."/>
            <person name="Denizot F."/>
            <person name="Devine K.M."/>
            <person name="Duesterhoeft A."/>
            <person name="Ehrlich S.D."/>
            <person name="Emmerson P.T."/>
            <person name="Entian K.-D."/>
            <person name="Errington J."/>
            <person name="Fabret C."/>
            <person name="Ferrari E."/>
            <person name="Foulger D."/>
            <person name="Fritz C."/>
            <person name="Fujita M."/>
            <person name="Fujita Y."/>
            <person name="Fuma S."/>
            <person name="Galizzi A."/>
            <person name="Galleron N."/>
            <person name="Ghim S.-Y."/>
            <person name="Glaser P."/>
            <person name="Goffeau A."/>
            <person name="Golightly E.J."/>
            <person name="Grandi G."/>
            <person name="Guiseppi G."/>
            <person name="Guy B.J."/>
            <person name="Haga K."/>
            <person name="Haiech J."/>
            <person name="Harwood C.R."/>
            <person name="Henaut A."/>
            <person name="Hilbert H."/>
            <person name="Holsappel S."/>
            <person name="Hosono S."/>
            <person name="Hullo M.-F."/>
            <person name="Itaya M."/>
            <person name="Jones L.-M."/>
            <person name="Joris B."/>
            <person name="Karamata D."/>
            <person name="Kasahara Y."/>
            <person name="Klaerr-Blanchard M."/>
            <person name="Klein C."/>
            <person name="Kobayashi Y."/>
            <person name="Koetter P."/>
            <person name="Koningstein G."/>
            <person name="Krogh S."/>
            <person name="Kumano M."/>
            <person name="Kurita K."/>
            <person name="Lapidus A."/>
            <person name="Lardinois S."/>
            <person name="Lauber J."/>
            <person name="Lazarevic V."/>
            <person name="Lee S.-M."/>
            <person name="Levine A."/>
            <person name="Liu H."/>
            <person name="Masuda S."/>
            <person name="Mauel C."/>
            <person name="Medigue C."/>
            <person name="Medina N."/>
            <person name="Mellado R.P."/>
            <person name="Mizuno M."/>
            <person name="Moestl D."/>
            <person name="Nakai S."/>
            <person name="Noback M."/>
            <person name="Noone D."/>
            <person name="O'Reilly M."/>
            <person name="Ogawa K."/>
            <person name="Ogiwara A."/>
            <person name="Oudega B."/>
            <person name="Park S.-H."/>
            <person name="Parro V."/>
            <person name="Pohl T.M."/>
            <person name="Portetelle D."/>
            <person name="Porwollik S."/>
            <person name="Prescott A.M."/>
            <person name="Presecan E."/>
            <person name="Pujic P."/>
            <person name="Purnelle B."/>
            <person name="Rapoport G."/>
            <person name="Rey M."/>
            <person name="Reynolds S."/>
            <person name="Rieger M."/>
            <person name="Rivolta C."/>
            <person name="Rocha E."/>
            <person name="Roche B."/>
            <person name="Rose M."/>
            <person name="Sadaie Y."/>
            <person name="Sato T."/>
            <person name="Scanlan E."/>
            <person name="Schleich S."/>
            <person name="Schroeter R."/>
            <person name="Scoffone F."/>
            <person name="Sekiguchi J."/>
            <person name="Sekowska A."/>
            <person name="Seror S.J."/>
            <person name="Serror P."/>
            <person name="Shin B.-S."/>
            <person name="Soldo B."/>
            <person name="Sorokin A."/>
            <person name="Tacconi E."/>
            <person name="Takagi T."/>
            <person name="Takahashi H."/>
            <person name="Takemaru K."/>
            <person name="Takeuchi M."/>
            <person name="Tamakoshi A."/>
            <person name="Tanaka T."/>
            <person name="Terpstra P."/>
            <person name="Tognoni A."/>
            <person name="Tosato V."/>
            <person name="Uchiyama S."/>
            <person name="Vandenbol M."/>
            <person name="Vannier F."/>
            <person name="Vassarotti A."/>
            <person name="Viari A."/>
            <person name="Wambutt R."/>
            <person name="Wedler E."/>
            <person name="Wedler H."/>
            <person name="Weitzenegger T."/>
            <person name="Winters P."/>
            <person name="Wipat A."/>
            <person name="Yamamoto H."/>
            <person name="Yamane K."/>
            <person name="Yasumoto K."/>
            <person name="Yata K."/>
            <person name="Yoshida K."/>
            <person name="Yoshikawa H.-F."/>
            <person name="Zumstein E."/>
            <person name="Yoshikawa H."/>
            <person name="Danchin A."/>
        </authorList>
    </citation>
    <scope>NUCLEOTIDE SEQUENCE [LARGE SCALE GENOMIC DNA]</scope>
    <source>
        <strain>168</strain>
    </source>
</reference>
<protein>
    <recommendedName>
        <fullName>Uncharacterized protein YunG</fullName>
    </recommendedName>
</protein>
<name>YUNG_BACSU</name>
<feature type="chain" id="PRO_0000360480" description="Uncharacterized protein YunG">
    <location>
        <begin position="1"/>
        <end position="115"/>
    </location>
</feature>
<proteinExistence type="predicted"/>
<keyword id="KW-1185">Reference proteome</keyword>